<protein>
    <recommendedName>
        <fullName evidence="1">Probable Fe(2+)-trafficking protein</fullName>
    </recommendedName>
</protein>
<feature type="chain" id="PRO_0000214501" description="Probable Fe(2+)-trafficking protein">
    <location>
        <begin position="1"/>
        <end position="91"/>
    </location>
</feature>
<keyword id="KW-0408">Iron</keyword>
<keyword id="KW-1185">Reference proteome</keyword>
<sequence length="91" mass="10321">MARMVHCVKLNKEAEGLDFPPLPGELGKKIWQSVSKEAWAGWLKHQTMLINENRLNMADTRARQYLLKQTEKYFFGEGADQASGYVPPPSA</sequence>
<dbReference type="EMBL" id="AL646052">
    <property type="protein sequence ID" value="CAD14937.1"/>
    <property type="molecule type" value="Genomic_DNA"/>
</dbReference>
<dbReference type="RefSeq" id="WP_011001184.1">
    <property type="nucleotide sequence ID" value="NC_003295.1"/>
</dbReference>
<dbReference type="SMR" id="Q8Y010"/>
<dbReference type="STRING" id="267608.RSc1235"/>
<dbReference type="EnsemblBacteria" id="CAD14937">
    <property type="protein sequence ID" value="CAD14937"/>
    <property type="gene ID" value="RSc1235"/>
</dbReference>
<dbReference type="KEGG" id="rso:RSc1235"/>
<dbReference type="eggNOG" id="COG2924">
    <property type="taxonomic scope" value="Bacteria"/>
</dbReference>
<dbReference type="HOGENOM" id="CLU_170994_0_0_4"/>
<dbReference type="Proteomes" id="UP000001436">
    <property type="component" value="Chromosome"/>
</dbReference>
<dbReference type="GO" id="GO:0005829">
    <property type="term" value="C:cytosol"/>
    <property type="evidence" value="ECO:0007669"/>
    <property type="project" value="TreeGrafter"/>
</dbReference>
<dbReference type="GO" id="GO:0005506">
    <property type="term" value="F:iron ion binding"/>
    <property type="evidence" value="ECO:0007669"/>
    <property type="project" value="UniProtKB-UniRule"/>
</dbReference>
<dbReference type="GO" id="GO:0034599">
    <property type="term" value="P:cellular response to oxidative stress"/>
    <property type="evidence" value="ECO:0007669"/>
    <property type="project" value="TreeGrafter"/>
</dbReference>
<dbReference type="FunFam" id="1.10.3880.10:FF:000001">
    <property type="entry name" value="Probable Fe(2+)-trafficking protein"/>
    <property type="match status" value="1"/>
</dbReference>
<dbReference type="Gene3D" id="1.10.3880.10">
    <property type="entry name" value="Fe(II) trafficking protein YggX"/>
    <property type="match status" value="1"/>
</dbReference>
<dbReference type="HAMAP" id="MF_00686">
    <property type="entry name" value="Fe_traffic_YggX"/>
    <property type="match status" value="1"/>
</dbReference>
<dbReference type="InterPro" id="IPR007457">
    <property type="entry name" value="Fe_traffick_prot_YggX"/>
</dbReference>
<dbReference type="InterPro" id="IPR036766">
    <property type="entry name" value="Fe_traffick_prot_YggX_sf"/>
</dbReference>
<dbReference type="NCBIfam" id="NF003817">
    <property type="entry name" value="PRK05408.1"/>
    <property type="match status" value="1"/>
</dbReference>
<dbReference type="PANTHER" id="PTHR36965">
    <property type="entry name" value="FE(2+)-TRAFFICKING PROTEIN-RELATED"/>
    <property type="match status" value="1"/>
</dbReference>
<dbReference type="PANTHER" id="PTHR36965:SF1">
    <property type="entry name" value="FE(2+)-TRAFFICKING PROTEIN-RELATED"/>
    <property type="match status" value="1"/>
</dbReference>
<dbReference type="Pfam" id="PF04362">
    <property type="entry name" value="Iron_traffic"/>
    <property type="match status" value="1"/>
</dbReference>
<dbReference type="PIRSF" id="PIRSF029827">
    <property type="entry name" value="Fe_traffic_YggX"/>
    <property type="match status" value="1"/>
</dbReference>
<dbReference type="SUPFAM" id="SSF111148">
    <property type="entry name" value="YggX-like"/>
    <property type="match status" value="1"/>
</dbReference>
<proteinExistence type="inferred from homology"/>
<reference key="1">
    <citation type="journal article" date="2002" name="Nature">
        <title>Genome sequence of the plant pathogen Ralstonia solanacearum.</title>
        <authorList>
            <person name="Salanoubat M."/>
            <person name="Genin S."/>
            <person name="Artiguenave F."/>
            <person name="Gouzy J."/>
            <person name="Mangenot S."/>
            <person name="Arlat M."/>
            <person name="Billault A."/>
            <person name="Brottier P."/>
            <person name="Camus J.-C."/>
            <person name="Cattolico L."/>
            <person name="Chandler M."/>
            <person name="Choisne N."/>
            <person name="Claudel-Renard C."/>
            <person name="Cunnac S."/>
            <person name="Demange N."/>
            <person name="Gaspin C."/>
            <person name="Lavie M."/>
            <person name="Moisan A."/>
            <person name="Robert C."/>
            <person name="Saurin W."/>
            <person name="Schiex T."/>
            <person name="Siguier P."/>
            <person name="Thebault P."/>
            <person name="Whalen M."/>
            <person name="Wincker P."/>
            <person name="Levy M."/>
            <person name="Weissenbach J."/>
            <person name="Boucher C.A."/>
        </authorList>
    </citation>
    <scope>NUCLEOTIDE SEQUENCE [LARGE SCALE GENOMIC DNA]</scope>
    <source>
        <strain>ATCC BAA-1114 / GMI1000</strain>
    </source>
</reference>
<evidence type="ECO:0000255" key="1">
    <source>
        <dbReference type="HAMAP-Rule" id="MF_00686"/>
    </source>
</evidence>
<name>FETP_RALN1</name>
<gene>
    <name type="ordered locus">RSc1235</name>
    <name type="ORF">RS02742</name>
</gene>
<organism>
    <name type="scientific">Ralstonia nicotianae (strain ATCC BAA-1114 / GMI1000)</name>
    <name type="common">Ralstonia solanacearum</name>
    <dbReference type="NCBI Taxonomy" id="267608"/>
    <lineage>
        <taxon>Bacteria</taxon>
        <taxon>Pseudomonadati</taxon>
        <taxon>Pseudomonadota</taxon>
        <taxon>Betaproteobacteria</taxon>
        <taxon>Burkholderiales</taxon>
        <taxon>Burkholderiaceae</taxon>
        <taxon>Ralstonia</taxon>
        <taxon>Ralstonia solanacearum species complex</taxon>
    </lineage>
</organism>
<accession>Q8Y010</accession>
<comment type="function">
    <text evidence="1">Could be a mediator in iron transactions between iron acquisition and iron-requiring processes, such as synthesis and/or repair of Fe-S clusters in biosynthetic enzymes.</text>
</comment>
<comment type="similarity">
    <text evidence="1">Belongs to the Fe(2+)-trafficking protein family.</text>
</comment>